<proteinExistence type="evidence at protein level"/>
<gene>
    <name type="primary">KRTAP6-1</name>
    <name type="synonym">KAP6-1</name>
</gene>
<sequence length="83" mass="8427">MCGYYGNYYGGLGCGSYSYGGLGCGYGSCYGSGFRRLGCGYGCGYGYGSRSLCGSGYGYGSRSLCGSGYGCGSGYGSGFGYYY</sequence>
<name>KRA61_SHEEP</name>
<feature type="initiator methionine" description="Removed" evidence="1">
    <location>
        <position position="1"/>
    </location>
</feature>
<feature type="chain" id="PRO_0000185223" description="Keratin-associated protein 6-1">
    <location>
        <begin position="2"/>
        <end position="83"/>
    </location>
</feature>
<feature type="repeat" description="RPT 1-1">
    <location>
        <begin position="9"/>
        <end position="15"/>
    </location>
</feature>
<feature type="repeat" description="RPT 1-2">
    <location>
        <begin position="19"/>
        <end position="25"/>
    </location>
</feature>
<feature type="repeat" description="RPT 2-1">
    <location>
        <begin position="44"/>
        <end position="55"/>
    </location>
</feature>
<feature type="repeat" description="RPT 2-2">
    <location>
        <begin position="56"/>
        <end position="67"/>
    </location>
</feature>
<feature type="sequence conflict" description="In Ref. 2; AA sequence." evidence="1" ref="2">
    <original>Y</original>
    <variation>G</variation>
    <location>
        <position position="17"/>
    </location>
</feature>
<protein>
    <recommendedName>
        <fullName>Keratin-associated protein 6-1</fullName>
    </recommendedName>
    <alternativeName>
        <fullName>Keratin, glycine/tyrosine-rich of hair</fullName>
    </alternativeName>
</protein>
<evidence type="ECO:0000305" key="1"/>
<organism>
    <name type="scientific">Ovis aries</name>
    <name type="common">Sheep</name>
    <dbReference type="NCBI Taxonomy" id="9940"/>
    <lineage>
        <taxon>Eukaryota</taxon>
        <taxon>Metazoa</taxon>
        <taxon>Chordata</taxon>
        <taxon>Craniata</taxon>
        <taxon>Vertebrata</taxon>
        <taxon>Euteleostomi</taxon>
        <taxon>Mammalia</taxon>
        <taxon>Eutheria</taxon>
        <taxon>Laurasiatheria</taxon>
        <taxon>Artiodactyla</taxon>
        <taxon>Ruminantia</taxon>
        <taxon>Pecora</taxon>
        <taxon>Bovidae</taxon>
        <taxon>Caprinae</taxon>
        <taxon>Ovis</taxon>
    </lineage>
</organism>
<comment type="function">
    <text>In the wool cortex, wool keratin intermediate filaments are embedded in an interfilamentous matrix, consisting of hair keratin-associated proteins (KRTAP), which are essential for the formation of a rigid and resistant wool shaft through their extensive disulfide bond cross-linking with abundant cysteine residues of wool keratins. The matrix proteins include the high-sulfur and high-glycine-tyrosine keratins.</text>
</comment>
<comment type="subunit">
    <text>Interacts with wool keratins.</text>
</comment>
<comment type="developmental stage">
    <text>The KAP6 proteins are first expressed in differentiating hair shaft keratinocytes, a considerable distance above the proliferative zone of the follicle bulb.</text>
</comment>
<comment type="similarity">
    <text evidence="1">Belongs to the KRTAP type 6 family.</text>
</comment>
<keyword id="KW-0903">Direct protein sequencing</keyword>
<keyword id="KW-0416">Keratin</keyword>
<keyword id="KW-1185">Reference proteome</keyword>
<keyword id="KW-0677">Repeat</keyword>
<dbReference type="EMBL" id="M95719">
    <property type="protein sequence ID" value="AAA31554.1"/>
    <property type="molecule type" value="Genomic_DNA"/>
</dbReference>
<dbReference type="PIR" id="A45466">
    <property type="entry name" value="A45466"/>
</dbReference>
<dbReference type="RefSeq" id="NP_001180328.1">
    <property type="nucleotide sequence ID" value="NM_001193399.1"/>
</dbReference>
<dbReference type="STRING" id="9940.ENSOARP00000022818"/>
<dbReference type="Ensembl" id="ENSOART00180020323">
    <property type="protein sequence ID" value="ENSOARP00180010448"/>
    <property type="gene ID" value="ENSOARG00180012409"/>
</dbReference>
<dbReference type="Ensembl" id="ENSOART00185019387">
    <property type="protein sequence ID" value="ENSOARP00185009688"/>
    <property type="gene ID" value="ENSOARG00185011893"/>
</dbReference>
<dbReference type="Ensembl" id="ENSOART00215081248">
    <property type="protein sequence ID" value="ENSOARP00215044958"/>
    <property type="gene ID" value="ENSOARG00215047829"/>
</dbReference>
<dbReference type="Ensembl" id="ENSOART00220013282">
    <property type="protein sequence ID" value="ENSOARP00220007612"/>
    <property type="gene ID" value="ENSOARG00220007941"/>
</dbReference>
<dbReference type="Ensembl" id="ENSOART00225068380">
    <property type="protein sequence ID" value="ENSOARP00225035021"/>
    <property type="gene ID" value="ENSOARG00225041185"/>
</dbReference>
<dbReference type="Ensembl" id="ENSOART00260001799">
    <property type="protein sequence ID" value="ENSOARP00260001212"/>
    <property type="gene ID" value="ENSOARG00260000996"/>
</dbReference>
<dbReference type="GeneID" id="100499198"/>
<dbReference type="KEGG" id="oas:100499198"/>
<dbReference type="CTD" id="337966"/>
<dbReference type="Proteomes" id="UP000002356">
    <property type="component" value="Unplaced"/>
</dbReference>
<dbReference type="GO" id="GO:0005882">
    <property type="term" value="C:intermediate filament"/>
    <property type="evidence" value="ECO:0007669"/>
    <property type="project" value="UniProtKB-KW"/>
</dbReference>
<dbReference type="GO" id="GO:0031424">
    <property type="term" value="P:keratinization"/>
    <property type="evidence" value="ECO:0007669"/>
    <property type="project" value="InterPro"/>
</dbReference>
<dbReference type="InterPro" id="IPR040313">
    <property type="entry name" value="KAP6"/>
</dbReference>
<dbReference type="PANTHER" id="PTHR31678:SF2">
    <property type="entry name" value="KERATIN-ASSOCIATED PROTEIN 6-1"/>
    <property type="match status" value="1"/>
</dbReference>
<dbReference type="PANTHER" id="PTHR31678">
    <property type="entry name" value="KERATIN-ASSOCIATED PROTEIN 6-3"/>
    <property type="match status" value="1"/>
</dbReference>
<reference key="1">
    <citation type="journal article" date="1993" name="J. Biol. Chem.">
        <title>Sequence, expression, and evolutionary conservation of a gene encoding a glycine/tyrosine-rich keratin-associated protein of hair.</title>
        <authorList>
            <person name="Fratini A."/>
            <person name="Powell B.C."/>
            <person name="Rogers G.E."/>
        </authorList>
    </citation>
    <scope>NUCLEOTIDE SEQUENCE [GENOMIC DNA]</scope>
    <source>
        <strain>Merino X Dorset Horn</strain>
        <tissue>Wool follicle</tissue>
    </source>
</reference>
<reference key="2">
    <citation type="journal article" date="1991" name="Ann. N. Y. Acad. Sci.">
        <title>Trichohyalin and matrix proteins.</title>
        <authorList>
            <person name="Rogers G.E."/>
            <person name="Fietz M.J."/>
            <person name="Fratini A."/>
        </authorList>
    </citation>
    <scope>PROTEIN SEQUENCE OF 17-83</scope>
</reference>
<accession>Q02958</accession>